<feature type="signal peptide" evidence="10">
    <location>
        <begin position="1"/>
        <end position="25"/>
    </location>
</feature>
<feature type="chain" id="PRO_0000315048" description="ER membrane protein complex subunit 10">
    <location>
        <begin position="26"/>
        <end position="262"/>
    </location>
</feature>
<feature type="topological domain" description="Lumenal" evidence="10">
    <location>
        <begin position="26"/>
        <end position="221"/>
    </location>
</feature>
<feature type="transmembrane region" description="Helical" evidence="1">
    <location>
        <begin position="222"/>
        <end position="242"/>
    </location>
</feature>
<feature type="topological domain" description="Cytoplasmic" evidence="10">
    <location>
        <begin position="243"/>
        <end position="262"/>
    </location>
</feature>
<feature type="glycosylation site" description="N-linked (GlcNAc...) asparagine" evidence="2 10">
    <location>
        <position position="182"/>
    </location>
</feature>
<feature type="splice variant" id="VSP_030473" description="In isoform 2." evidence="14 15 16">
    <original>MYIIPVVLFLMMSGAPDTGGQGGGGGGGGGGGSGR</original>
    <variation>HIILGGAVLLTALRPAAPGPAPPPQEA</variation>
    <location>
        <begin position="228"/>
        <end position="262"/>
    </location>
</feature>
<feature type="sequence conflict" description="In Ref. 1; AAO23975." evidence="17" ref="1">
    <original>D</original>
    <variation>G</variation>
    <location>
        <position position="63"/>
    </location>
</feature>
<feature type="sequence conflict" description="In Ref. 4; AAH32948/AAH35001." evidence="17" ref="4">
    <original>T</original>
    <variation>A</variation>
    <location>
        <position position="245"/>
    </location>
</feature>
<feature type="strand" evidence="24">
    <location>
        <begin position="51"/>
        <end position="58"/>
    </location>
</feature>
<feature type="strand" evidence="24">
    <location>
        <begin position="62"/>
        <end position="64"/>
    </location>
</feature>
<feature type="strand" evidence="24">
    <location>
        <begin position="69"/>
        <end position="77"/>
    </location>
</feature>
<feature type="turn" evidence="24">
    <location>
        <begin position="78"/>
        <end position="80"/>
    </location>
</feature>
<feature type="strand" evidence="24">
    <location>
        <begin position="83"/>
        <end position="87"/>
    </location>
</feature>
<feature type="helix" evidence="24">
    <location>
        <begin position="92"/>
        <end position="103"/>
    </location>
</feature>
<feature type="strand" evidence="24">
    <location>
        <begin position="108"/>
        <end position="114"/>
    </location>
</feature>
<feature type="strand" evidence="24">
    <location>
        <begin position="126"/>
        <end position="132"/>
    </location>
</feature>
<feature type="helix" evidence="24">
    <location>
        <begin position="135"/>
        <end position="139"/>
    </location>
</feature>
<feature type="turn" evidence="23">
    <location>
        <begin position="140"/>
        <end position="142"/>
    </location>
</feature>
<feature type="strand" evidence="24">
    <location>
        <begin position="144"/>
        <end position="150"/>
    </location>
</feature>
<feature type="strand" evidence="24">
    <location>
        <begin position="152"/>
        <end position="154"/>
    </location>
</feature>
<feature type="strand" evidence="24">
    <location>
        <begin position="156"/>
        <end position="162"/>
    </location>
</feature>
<feature type="turn" evidence="24">
    <location>
        <begin position="175"/>
        <end position="179"/>
    </location>
</feature>
<feature type="strand" evidence="24">
    <location>
        <begin position="183"/>
        <end position="188"/>
    </location>
</feature>
<feature type="helix" evidence="24">
    <location>
        <begin position="198"/>
        <end position="206"/>
    </location>
</feature>
<proteinExistence type="evidence at protein level"/>
<protein>
    <recommendedName>
        <fullName>ER membrane protein complex subunit 10</fullName>
    </recommendedName>
    <alternativeName>
        <fullName>Hematopoietic signal peptide-containing membrane domain-containing protein 1</fullName>
    </alternativeName>
</protein>
<accession>Q5UCC4</accession>
<accession>Q5UCC6</accession>
<accession>Q69YT5</accession>
<accession>Q6UWP3</accession>
<accession>Q86YL4</accession>
<accession>Q8N541</accession>
<name>EMC10_HUMAN</name>
<sequence>MAAASAGATRLLLLLLMAVAAPSRARGSGCRAGTGARGAGAEGREGEACGTVGLLLEHSFEIDDSANFRKRGSLLWNQQDGTLSLSQRQLSEEERGRLRDVAALNGLYRVRIPRRPGALDGLEAGGYVSSFVPACSLVESHLSDQLTLHVDVAGNVVGVSVVTHPGGCRGHEVEDVDLELFNTSVQLQPPTTAPGPETAAFIERLEMEQAQKAKNPQEQKSFFAKYWMYIIPVVLFLMMSGAPDTGGQGGGGGGGGGGGSGR</sequence>
<dbReference type="EMBL" id="AY194293">
    <property type="protein sequence ID" value="AAO23975.2"/>
    <property type="molecule type" value="mRNA"/>
</dbReference>
<dbReference type="EMBL" id="AY761095">
    <property type="protein sequence ID" value="AAV30543.1"/>
    <property type="molecule type" value="mRNA"/>
</dbReference>
<dbReference type="EMBL" id="AY761097">
    <property type="protein sequence ID" value="AAV30545.1"/>
    <property type="molecule type" value="mRNA"/>
</dbReference>
<dbReference type="EMBL" id="CH471135">
    <property type="protein sequence ID" value="EAW71871.1"/>
    <property type="molecule type" value="Genomic_DNA"/>
</dbReference>
<dbReference type="EMBL" id="BC032948">
    <property type="protein sequence ID" value="AAH32948.1"/>
    <property type="molecule type" value="mRNA"/>
</dbReference>
<dbReference type="EMBL" id="BC035001">
    <property type="protein sequence ID" value="AAH35001.1"/>
    <property type="molecule type" value="mRNA"/>
</dbReference>
<dbReference type="EMBL" id="AY358710">
    <property type="protein sequence ID" value="AAQ89073.1"/>
    <property type="status" value="ALT_SEQ"/>
    <property type="molecule type" value="mRNA"/>
</dbReference>
<dbReference type="EMBL" id="AL512761">
    <property type="protein sequence ID" value="CAH10658.1"/>
    <property type="molecule type" value="mRNA"/>
</dbReference>
<dbReference type="CCDS" id="CCDS12796.1">
    <molecule id="Q5UCC4-1"/>
</dbReference>
<dbReference type="CCDS" id="CCDS42594.1">
    <molecule id="Q5UCC4-2"/>
</dbReference>
<dbReference type="RefSeq" id="NP_778233.4">
    <molecule id="Q5UCC4-2"/>
    <property type="nucleotide sequence ID" value="NM_175063.5"/>
</dbReference>
<dbReference type="RefSeq" id="NP_996261.1">
    <molecule id="Q5UCC4-1"/>
    <property type="nucleotide sequence ID" value="NM_206538.4"/>
</dbReference>
<dbReference type="PDB" id="6WW7">
    <property type="method" value="EM"/>
    <property type="resolution" value="3.40 A"/>
    <property type="chains" value="I=1-262"/>
</dbReference>
<dbReference type="PDB" id="6Z3W">
    <property type="method" value="EM"/>
    <property type="resolution" value="6.40 A"/>
    <property type="chains" value="I=1-262"/>
</dbReference>
<dbReference type="PDB" id="7ADO">
    <property type="method" value="EM"/>
    <property type="resolution" value="3.39 A"/>
    <property type="chains" value="I=2-262"/>
</dbReference>
<dbReference type="PDB" id="7ADP">
    <property type="method" value="EM"/>
    <property type="resolution" value="3.60 A"/>
    <property type="chains" value="I=2-262"/>
</dbReference>
<dbReference type="PDB" id="8EOI">
    <property type="method" value="EM"/>
    <property type="resolution" value="3.40 A"/>
    <property type="chains" value="I=50-206"/>
</dbReference>
<dbReference type="PDB" id="8J0N">
    <property type="method" value="EM"/>
    <property type="resolution" value="3.47 A"/>
    <property type="chains" value="J=1-207"/>
</dbReference>
<dbReference type="PDB" id="8J0O">
    <property type="method" value="EM"/>
    <property type="resolution" value="3.32 A"/>
    <property type="chains" value="J=1-207"/>
</dbReference>
<dbReference type="PDB" id="8S9S">
    <property type="method" value="EM"/>
    <property type="resolution" value="3.60 A"/>
    <property type="chains" value="10=1-262"/>
</dbReference>
<dbReference type="PDB" id="9C7V">
    <property type="method" value="EM"/>
    <property type="resolution" value="6.60 A"/>
    <property type="chains" value="10=1-262"/>
</dbReference>
<dbReference type="PDBsum" id="6WW7"/>
<dbReference type="PDBsum" id="6Z3W"/>
<dbReference type="PDBsum" id="7ADO"/>
<dbReference type="PDBsum" id="7ADP"/>
<dbReference type="PDBsum" id="8EOI"/>
<dbReference type="PDBsum" id="8J0N"/>
<dbReference type="PDBsum" id="8J0O"/>
<dbReference type="PDBsum" id="8S9S"/>
<dbReference type="PDBsum" id="9C7V"/>
<dbReference type="EMDB" id="EMD-11732"/>
<dbReference type="EMDB" id="EMD-11733"/>
<dbReference type="EMDB" id="EMD-21929"/>
<dbReference type="EMDB" id="EMD-28376"/>
<dbReference type="EMDB" id="EMD-35906"/>
<dbReference type="EMDB" id="EMD-35907"/>
<dbReference type="EMDB" id="EMD-40245"/>
<dbReference type="EMDB" id="EMD-40246"/>
<dbReference type="EMDB" id="EMD-45295"/>
<dbReference type="SMR" id="Q5UCC4"/>
<dbReference type="BioGRID" id="129844">
    <property type="interactions" value="57"/>
</dbReference>
<dbReference type="ComplexPortal" id="CPX-5848">
    <property type="entry name" value="Endoplasmic reticulum membrane complex, EMC8 variant"/>
</dbReference>
<dbReference type="ComplexPortal" id="CPX-5881">
    <property type="entry name" value="Endoplasmic reticulum membrane complex, EMC9 variant"/>
</dbReference>
<dbReference type="CORUM" id="Q5UCC4"/>
<dbReference type="FunCoup" id="Q5UCC4">
    <property type="interactions" value="974"/>
</dbReference>
<dbReference type="IntAct" id="Q5UCC4">
    <property type="interactions" value="29"/>
</dbReference>
<dbReference type="MINT" id="Q5UCC4"/>
<dbReference type="STRING" id="9606.ENSP00000334037"/>
<dbReference type="TCDB" id="3.A.27.1.1">
    <property type="family name" value="the endoplasmic reticulum membrane protein insertion complex (emc) family"/>
</dbReference>
<dbReference type="GlyConnect" id="1224">
    <property type="glycosylation" value="4 N-Linked glycans (1 site)"/>
</dbReference>
<dbReference type="GlyCosmos" id="Q5UCC4">
    <property type="glycosylation" value="3 sites, 5 glycans"/>
</dbReference>
<dbReference type="GlyGen" id="Q5UCC4">
    <property type="glycosylation" value="5 sites, 5 N-linked glycans (1 site), 3 O-linked glycans (4 sites)"/>
</dbReference>
<dbReference type="iPTMnet" id="Q5UCC4"/>
<dbReference type="PhosphoSitePlus" id="Q5UCC4"/>
<dbReference type="SwissPalm" id="Q5UCC4"/>
<dbReference type="BioMuta" id="EMC10"/>
<dbReference type="DMDM" id="74708213"/>
<dbReference type="jPOST" id="Q5UCC4"/>
<dbReference type="MassIVE" id="Q5UCC4"/>
<dbReference type="PaxDb" id="9606-ENSP00000334037"/>
<dbReference type="PeptideAtlas" id="Q5UCC4"/>
<dbReference type="ProteomicsDB" id="65243">
    <molecule id="Q5UCC4-1"/>
</dbReference>
<dbReference type="ProteomicsDB" id="65244">
    <molecule id="Q5UCC4-2"/>
</dbReference>
<dbReference type="Pumba" id="Q5UCC4"/>
<dbReference type="TopDownProteomics" id="Q5UCC4-1">
    <molecule id="Q5UCC4-1"/>
</dbReference>
<dbReference type="Antibodypedia" id="53684">
    <property type="antibodies" value="74 antibodies from 17 providers"/>
</dbReference>
<dbReference type="DNASU" id="284361"/>
<dbReference type="Ensembl" id="ENST00000334976.11">
    <molecule id="Q5UCC4-1"/>
    <property type="protein sequence ID" value="ENSP00000334037.6"/>
    <property type="gene ID" value="ENSG00000161671.17"/>
</dbReference>
<dbReference type="Ensembl" id="ENST00000376918.7">
    <molecule id="Q5UCC4-2"/>
    <property type="protein sequence ID" value="ENSP00000366117.2"/>
    <property type="gene ID" value="ENSG00000161671.17"/>
</dbReference>
<dbReference type="GeneID" id="284361"/>
<dbReference type="KEGG" id="hsa:284361"/>
<dbReference type="MANE-Select" id="ENST00000334976.11">
    <property type="protein sequence ID" value="ENSP00000334037.6"/>
    <property type="RefSeq nucleotide sequence ID" value="NM_206538.4"/>
    <property type="RefSeq protein sequence ID" value="NP_996261.1"/>
</dbReference>
<dbReference type="UCSC" id="uc002psk.5">
    <molecule id="Q5UCC4-1"/>
    <property type="organism name" value="human"/>
</dbReference>
<dbReference type="AGR" id="HGNC:27609"/>
<dbReference type="CTD" id="284361"/>
<dbReference type="DisGeNET" id="284361"/>
<dbReference type="GeneCards" id="EMC10"/>
<dbReference type="GeneReviews" id="EMC10"/>
<dbReference type="HGNC" id="HGNC:27609">
    <property type="gene designation" value="EMC10"/>
</dbReference>
<dbReference type="HPA" id="ENSG00000161671">
    <property type="expression patterns" value="Tissue enhanced (skeletal)"/>
</dbReference>
<dbReference type="MalaCards" id="EMC10"/>
<dbReference type="MIM" id="614545">
    <property type="type" value="gene"/>
</dbReference>
<dbReference type="MIM" id="619264">
    <property type="type" value="phenotype"/>
</dbReference>
<dbReference type="neXtProt" id="NX_Q5UCC4"/>
<dbReference type="OpenTargets" id="ENSG00000161671"/>
<dbReference type="Orphanet" id="528084">
    <property type="disease" value="Non-specific syndromic intellectual disability"/>
</dbReference>
<dbReference type="PharmGKB" id="PA162378790"/>
<dbReference type="VEuPathDB" id="HostDB:ENSG00000161671"/>
<dbReference type="eggNOG" id="KOG4827">
    <property type="taxonomic scope" value="Eukaryota"/>
</dbReference>
<dbReference type="GeneTree" id="ENSGT00390000004520"/>
<dbReference type="HOGENOM" id="CLU_065716_0_0_1"/>
<dbReference type="InParanoid" id="Q5UCC4"/>
<dbReference type="OMA" id="QFNDVLW"/>
<dbReference type="OrthoDB" id="1894652at2759"/>
<dbReference type="PAN-GO" id="Q5UCC4">
    <property type="GO annotations" value="1 GO annotation based on evolutionary models"/>
</dbReference>
<dbReference type="PhylomeDB" id="Q5UCC4"/>
<dbReference type="TreeFam" id="TF314052"/>
<dbReference type="PathwayCommons" id="Q5UCC4"/>
<dbReference type="SignaLink" id="Q5UCC4"/>
<dbReference type="BioGRID-ORCS" id="284361">
    <property type="hits" value="12 hits in 1153 CRISPR screens"/>
</dbReference>
<dbReference type="ChiTaRS" id="EMC10">
    <property type="organism name" value="human"/>
</dbReference>
<dbReference type="GenomeRNAi" id="284361"/>
<dbReference type="Pharos" id="Q5UCC4">
    <property type="development level" value="Tbio"/>
</dbReference>
<dbReference type="PRO" id="PR:Q5UCC4"/>
<dbReference type="Proteomes" id="UP000005640">
    <property type="component" value="Chromosome 19"/>
</dbReference>
<dbReference type="RNAct" id="Q5UCC4">
    <property type="molecule type" value="protein"/>
</dbReference>
<dbReference type="Bgee" id="ENSG00000161671">
    <property type="expression patterns" value="Expressed in adenohypophysis and 177 other cell types or tissues"/>
</dbReference>
<dbReference type="ExpressionAtlas" id="Q5UCC4">
    <property type="expression patterns" value="baseline and differential"/>
</dbReference>
<dbReference type="GO" id="GO:0072546">
    <property type="term" value="C:EMC complex"/>
    <property type="evidence" value="ECO:0000314"/>
    <property type="project" value="UniProtKB"/>
</dbReference>
<dbReference type="GO" id="GO:0005789">
    <property type="term" value="C:endoplasmic reticulum membrane"/>
    <property type="evidence" value="ECO:0000314"/>
    <property type="project" value="UniProtKB"/>
</dbReference>
<dbReference type="GO" id="GO:0005576">
    <property type="term" value="C:extracellular region"/>
    <property type="evidence" value="ECO:0000314"/>
    <property type="project" value="UniProtKB"/>
</dbReference>
<dbReference type="GO" id="GO:0016020">
    <property type="term" value="C:membrane"/>
    <property type="evidence" value="ECO:0000314"/>
    <property type="project" value="UniProtKB"/>
</dbReference>
<dbReference type="GO" id="GO:0001525">
    <property type="term" value="P:angiogenesis"/>
    <property type="evidence" value="ECO:0007669"/>
    <property type="project" value="UniProtKB-KW"/>
</dbReference>
<dbReference type="GO" id="GO:0045766">
    <property type="term" value="P:positive regulation of angiogenesis"/>
    <property type="evidence" value="ECO:0000315"/>
    <property type="project" value="UniProtKB"/>
</dbReference>
<dbReference type="GO" id="GO:0010595">
    <property type="term" value="P:positive regulation of endothelial cell migration"/>
    <property type="evidence" value="ECO:0000250"/>
    <property type="project" value="UniProtKB"/>
</dbReference>
<dbReference type="GO" id="GO:0001938">
    <property type="term" value="P:positive regulation of endothelial cell proliferation"/>
    <property type="evidence" value="ECO:0000314"/>
    <property type="project" value="UniProtKB"/>
</dbReference>
<dbReference type="GO" id="GO:0045050">
    <property type="term" value="P:protein insertion into ER membrane by stop-transfer membrane-anchor sequence"/>
    <property type="evidence" value="ECO:0000314"/>
    <property type="project" value="ComplexPortal"/>
</dbReference>
<dbReference type="GO" id="GO:0071816">
    <property type="term" value="P:tail-anchored membrane protein insertion into ER membrane"/>
    <property type="evidence" value="ECO:0000314"/>
    <property type="project" value="UniProtKB"/>
</dbReference>
<dbReference type="CDD" id="cd22209">
    <property type="entry name" value="EMC10"/>
    <property type="match status" value="1"/>
</dbReference>
<dbReference type="PANTHER" id="PTHR21397">
    <property type="entry name" value="CHROMATIN COMPLEXES SUBUNIT BAP18-RELATED"/>
    <property type="match status" value="1"/>
</dbReference>
<dbReference type="PANTHER" id="PTHR21397:SF4">
    <property type="entry name" value="ER MEMBRANE PROTEIN COMPLEX SUBUNIT 10"/>
    <property type="match status" value="1"/>
</dbReference>
<dbReference type="Pfam" id="PF21203">
    <property type="entry name" value="ECM10"/>
    <property type="match status" value="1"/>
</dbReference>
<organism>
    <name type="scientific">Homo sapiens</name>
    <name type="common">Human</name>
    <dbReference type="NCBI Taxonomy" id="9606"/>
    <lineage>
        <taxon>Eukaryota</taxon>
        <taxon>Metazoa</taxon>
        <taxon>Chordata</taxon>
        <taxon>Craniata</taxon>
        <taxon>Vertebrata</taxon>
        <taxon>Euteleostomi</taxon>
        <taxon>Mammalia</taxon>
        <taxon>Eutheria</taxon>
        <taxon>Euarchontoglires</taxon>
        <taxon>Primates</taxon>
        <taxon>Haplorrhini</taxon>
        <taxon>Catarrhini</taxon>
        <taxon>Hominidae</taxon>
        <taxon>Homo</taxon>
    </lineage>
</organism>
<reference key="1">
    <citation type="journal article" date="2004" name="Endocr. Relat. Cancer">
        <title>Gene expression profiling in human insulinoma tissue: genes involved in the insulin secretion pathway and cloning of novel full-length cDNAs.</title>
        <authorList>
            <person name="Wang X.-C."/>
            <person name="Xu S.-Y."/>
            <person name="Wu X.-Y."/>
            <person name="Song H.-D."/>
            <person name="Mao Y.-F."/>
            <person name="Fan H.-Y."/>
            <person name="Yu F."/>
            <person name="Mou B."/>
            <person name="Gu Y.-Y."/>
            <person name="Xu L.-Q."/>
            <person name="Zhou X.-O."/>
            <person name="Chen Z."/>
            <person name="Chen J.-L."/>
            <person name="Hu R.-M."/>
        </authorList>
    </citation>
    <scope>NUCLEOTIDE SEQUENCE [MRNA] (ISOFORM 2)</scope>
    <source>
        <tissue>Insulinoma</tissue>
    </source>
</reference>
<reference key="2">
    <citation type="journal article" date="2011" name="J. Neurooncol.">
        <title>hHSS1: a novel secreted factor and suppressor of glioma growth located at chromosome 19q13.33.</title>
        <authorList>
            <person name="Junes-Gill K.S."/>
            <person name="Gallaher T.K."/>
            <person name="Gluzman-Poltorak Z."/>
            <person name="Miller J.D."/>
            <person name="Wheeler C.J."/>
            <person name="Fan X."/>
            <person name="Basile L.A."/>
        </authorList>
    </citation>
    <scope>NUCLEOTIDE SEQUENCE [MRNA] (ISOFORMS 1 AND 2)</scope>
    <scope>GLYCOSYLATION</scope>
    <scope>SUBCELLULAR LOCATION (ISOFORM 2)</scope>
    <scope>TISSUE SPECIFICITY</scope>
    <source>
        <tissue>Testis</tissue>
    </source>
</reference>
<reference key="3">
    <citation type="submission" date="2005-07" db="EMBL/GenBank/DDBJ databases">
        <authorList>
            <person name="Mural R.J."/>
            <person name="Istrail S."/>
            <person name="Sutton G.G."/>
            <person name="Florea L."/>
            <person name="Halpern A.L."/>
            <person name="Mobarry C.M."/>
            <person name="Lippert R."/>
            <person name="Walenz B."/>
            <person name="Shatkay H."/>
            <person name="Dew I."/>
            <person name="Miller J.R."/>
            <person name="Flanigan M.J."/>
            <person name="Edwards N.J."/>
            <person name="Bolanos R."/>
            <person name="Fasulo D."/>
            <person name="Halldorsson B.V."/>
            <person name="Hannenhalli S."/>
            <person name="Turner R."/>
            <person name="Yooseph S."/>
            <person name="Lu F."/>
            <person name="Nusskern D.R."/>
            <person name="Shue B.C."/>
            <person name="Zheng X.H."/>
            <person name="Zhong F."/>
            <person name="Delcher A.L."/>
            <person name="Huson D.H."/>
            <person name="Kravitz S.A."/>
            <person name="Mouchard L."/>
            <person name="Reinert K."/>
            <person name="Remington K.A."/>
            <person name="Clark A.G."/>
            <person name="Waterman M.S."/>
            <person name="Eichler E.E."/>
            <person name="Adams M.D."/>
            <person name="Hunkapiller M.W."/>
            <person name="Myers E.W."/>
            <person name="Venter J.C."/>
        </authorList>
    </citation>
    <scope>NUCLEOTIDE SEQUENCE [LARGE SCALE GENOMIC DNA]</scope>
</reference>
<reference key="4">
    <citation type="journal article" date="2004" name="Genome Res.">
        <title>The status, quality, and expansion of the NIH full-length cDNA project: the Mammalian Gene Collection (MGC).</title>
        <authorList>
            <consortium name="The MGC Project Team"/>
        </authorList>
    </citation>
    <scope>NUCLEOTIDE SEQUENCE [LARGE SCALE MRNA] (ISOFORM 1)</scope>
    <source>
        <tissue>Brain</tissue>
    </source>
</reference>
<reference key="5">
    <citation type="journal article" date="2003" name="Genome Res.">
        <title>The secreted protein discovery initiative (SPDI), a large-scale effort to identify novel human secreted and transmembrane proteins: a bioinformatics assessment.</title>
        <authorList>
            <person name="Clark H.F."/>
            <person name="Gurney A.L."/>
            <person name="Abaya E."/>
            <person name="Baker K."/>
            <person name="Baldwin D.T."/>
            <person name="Brush J."/>
            <person name="Chen J."/>
            <person name="Chow B."/>
            <person name="Chui C."/>
            <person name="Crowley C."/>
            <person name="Currell B."/>
            <person name="Deuel B."/>
            <person name="Dowd P."/>
            <person name="Eaton D."/>
            <person name="Foster J.S."/>
            <person name="Grimaldi C."/>
            <person name="Gu Q."/>
            <person name="Hass P.E."/>
            <person name="Heldens S."/>
            <person name="Huang A."/>
            <person name="Kim H.S."/>
            <person name="Klimowski L."/>
            <person name="Jin Y."/>
            <person name="Johnson S."/>
            <person name="Lee J."/>
            <person name="Lewis L."/>
            <person name="Liao D."/>
            <person name="Mark M.R."/>
            <person name="Robbie E."/>
            <person name="Sanchez C."/>
            <person name="Schoenfeld J."/>
            <person name="Seshagiri S."/>
            <person name="Simmons L."/>
            <person name="Singh J."/>
            <person name="Smith V."/>
            <person name="Stinson J."/>
            <person name="Vagts A."/>
            <person name="Vandlen R.L."/>
            <person name="Watanabe C."/>
            <person name="Wieand D."/>
            <person name="Woods K."/>
            <person name="Xie M.-H."/>
            <person name="Yansura D.G."/>
            <person name="Yi S."/>
            <person name="Yu G."/>
            <person name="Yuan J."/>
            <person name="Zhang M."/>
            <person name="Zhang Z."/>
            <person name="Goddard A.D."/>
            <person name="Wood W.I."/>
            <person name="Godowski P.J."/>
            <person name="Gray A.M."/>
        </authorList>
    </citation>
    <scope>NUCLEOTIDE SEQUENCE [LARGE SCALE MRNA] OF 1-261 (ISOFORM 1)</scope>
</reference>
<reference key="6">
    <citation type="journal article" date="2007" name="BMC Genomics">
        <title>The full-ORF clone resource of the German cDNA consortium.</title>
        <authorList>
            <person name="Bechtel S."/>
            <person name="Rosenfelder H."/>
            <person name="Duda A."/>
            <person name="Schmidt C.P."/>
            <person name="Ernst U."/>
            <person name="Wellenreuther R."/>
            <person name="Mehrle A."/>
            <person name="Schuster C."/>
            <person name="Bahr A."/>
            <person name="Bloecker H."/>
            <person name="Heubner D."/>
            <person name="Hoerlein A."/>
            <person name="Michel G."/>
            <person name="Wedler H."/>
            <person name="Koehrer K."/>
            <person name="Ottenwaelder B."/>
            <person name="Poustka A."/>
            <person name="Wiemann S."/>
            <person name="Schupp I."/>
        </authorList>
    </citation>
    <scope>NUCLEOTIDE SEQUENCE [LARGE SCALE MRNA] OF 140-262 (ISOFORM 2)</scope>
    <source>
        <tissue>Testis</tissue>
    </source>
</reference>
<reference key="7">
    <citation type="journal article" date="2009" name="J. Proteome Res.">
        <title>Glycoproteomics analysis of human liver tissue by combination of multiple enzyme digestion and hydrazide chemistry.</title>
        <authorList>
            <person name="Chen R."/>
            <person name="Jiang X."/>
            <person name="Sun D."/>
            <person name="Han G."/>
            <person name="Wang F."/>
            <person name="Ye M."/>
            <person name="Wang L."/>
            <person name="Zou H."/>
        </authorList>
    </citation>
    <scope>GLYCOSYLATION [LARGE SCALE ANALYSIS] AT ASN-182</scope>
    <source>
        <tissue>Liver</tissue>
    </source>
</reference>
<reference key="8">
    <citation type="journal article" date="2009" name="J. Endocrinol.">
        <title>Molecular cloning of a novel secreted peptide, INM02, and regulation of its expression by glucose.</title>
        <authorList>
            <person name="Wang X."/>
            <person name="Gong W."/>
            <person name="Liu Y."/>
            <person name="Yang Z."/>
            <person name="Zhou W."/>
            <person name="Wang M."/>
            <person name="Yang Z."/>
            <person name="Wen J."/>
            <person name="Hu R."/>
        </authorList>
    </citation>
    <scope>TISSUE SPECIFICITY</scope>
    <scope>SUBCELLULAR LOCATION (ISOFORM 2)</scope>
</reference>
<reference key="9">
    <citation type="journal article" date="2012" name="Nat. Cell Biol.">
        <title>Defining human ERAD networks through an integrative mapping strategy.</title>
        <authorList>
            <person name="Christianson J.C."/>
            <person name="Olzmann J.A."/>
            <person name="Shaler T.A."/>
            <person name="Sowa M.E."/>
            <person name="Bennett E.J."/>
            <person name="Richter C.M."/>
            <person name="Tyler R.E."/>
            <person name="Greenblatt E.J."/>
            <person name="Harper J.W."/>
            <person name="Kopito R.R."/>
        </authorList>
    </citation>
    <scope>IDENTIFICATION IN THE EMC COMPLEX</scope>
    <scope>SUBCELLULAR LOCATION (ISOFORM 1)</scope>
</reference>
<reference key="10">
    <citation type="journal article" date="2015" name="Proteomics">
        <title>N-terminome analysis of the human mitochondrial proteome.</title>
        <authorList>
            <person name="Vaca Jacome A.S."/>
            <person name="Rabilloud T."/>
            <person name="Schaeffer-Reiss C."/>
            <person name="Rompais M."/>
            <person name="Ayoub D."/>
            <person name="Lane L."/>
            <person name="Bairoch A."/>
            <person name="Van Dorsselaer A."/>
            <person name="Carapito C."/>
        </authorList>
    </citation>
    <scope>IDENTIFICATION BY MASS SPECTROMETRY [LARGE SCALE ANALYSIS]</scope>
</reference>
<reference key="11">
    <citation type="journal article" date="2017" name="Circulation">
        <title>EMC10 (endoplasmic reticulum membrane protein complex subunit 10) is a bone marrow-derived angiogenic growth factor promoting tissue repair after myocardial infarction.</title>
        <authorList>
            <person name="Reboll M.R."/>
            <person name="Korf-Klingebiel M."/>
            <person name="Klede S."/>
            <person name="Polten F."/>
            <person name="Brinkmann E."/>
            <person name="Reimann I."/>
            <person name="Schoenfeld H.J."/>
            <person name="Bobadilla M."/>
            <person name="Faix J."/>
            <person name="Kensah G."/>
            <person name="Gruh I."/>
            <person name="Klintschar M."/>
            <person name="Gaestel M."/>
            <person name="Niessen H.W."/>
            <person name="Pich A."/>
            <person name="Bauersachs J."/>
            <person name="Gogos J.A."/>
            <person name="Wang Y."/>
            <person name="Wollert K.C."/>
        </authorList>
    </citation>
    <scope>FUNCTION</scope>
    <scope>SUBCELLULAR LOCATION (ISOFORM 2)</scope>
    <scope>TISSUE SPECIFICITY</scope>
</reference>
<reference key="12">
    <citation type="journal article" date="2018" name="Cell">
        <title>EMC Is Required to Initiate Accurate Membrane Protein Topogenesis.</title>
        <authorList>
            <person name="Chitwood P.J."/>
            <person name="Juszkiewicz S."/>
            <person name="Guna A."/>
            <person name="Shao S."/>
            <person name="Hegde R.S."/>
        </authorList>
    </citation>
    <scope>FUNCTION</scope>
</reference>
<reference key="13">
    <citation type="journal article" date="2018" name="Elife">
        <title>The ER membrane protein complex interacts cotranslationally to enable biogenesis of multipass membrane proteins.</title>
        <authorList>
            <person name="Shurtleff M.J."/>
            <person name="Itzhak D.N."/>
            <person name="Hussmann J.A."/>
            <person name="Schirle Oakdale N.T."/>
            <person name="Costa E.A."/>
            <person name="Jonikas M."/>
            <person name="Weibezahn J."/>
            <person name="Popova K.D."/>
            <person name="Jan C.H."/>
            <person name="Sinitcyn P."/>
            <person name="Vembar S.S."/>
            <person name="Hernandez H."/>
            <person name="Cox J."/>
            <person name="Burlingame A.L."/>
            <person name="Brodsky J.L."/>
            <person name="Frost A."/>
            <person name="Borner G.H."/>
            <person name="Weissman J.S."/>
        </authorList>
    </citation>
    <scope>FUNCTION</scope>
</reference>
<reference key="14">
    <citation type="journal article" date="2018" name="Science">
        <title>The ER membrane protein complex is a transmembrane domain insertase.</title>
        <authorList>
            <person name="Guna A."/>
            <person name="Volkmar N."/>
            <person name="Christianson J.C."/>
            <person name="Hegde R.S."/>
        </authorList>
    </citation>
    <scope>FUNCTION</scope>
    <scope>SUBUNIT</scope>
</reference>
<reference key="15">
    <citation type="journal article" date="2020" name="Clin. Genet.">
        <title>EMC10 homozygous variant identified in a family with global developmental delay, mild intellectual disability, and speech delay.</title>
        <authorList>
            <person name="Umair M."/>
            <person name="Ballow M."/>
            <person name="Asiri A."/>
            <person name="Alyafee Y."/>
            <person name="Al Tuwaijri A."/>
            <person name="Alhamoudi K.M."/>
            <person name="Aloraini T."/>
            <person name="Abdelhakim M."/>
            <person name="Althagafi A.T."/>
            <person name="Kafkas S."/>
            <person name="Alsubaie L."/>
            <person name="Alrifai M.T."/>
            <person name="Hoehndorf R."/>
            <person name="Alfares A."/>
            <person name="Alfadhel M."/>
        </authorList>
    </citation>
    <scope>INVOLVEMENT IN NEDDFAS</scope>
</reference>
<reference key="16">
    <citation type="journal article" date="2021" name="Genet. Med.">
        <title>A recurrent, homozygous EMC10 frameshift variant is associated with a syndrome of developmental delay with variable seizures and dysmorphic features.</title>
        <authorList>
            <person name="Shao D.D."/>
            <person name="Straussberg R."/>
            <person name="Ahmed H."/>
            <person name="Khan A."/>
            <person name="Tian S."/>
            <person name="Hill R.S."/>
            <person name="Smith R.S."/>
            <person name="Majmundar A.J."/>
            <person name="Ameziane N."/>
            <person name="Neil J.E."/>
            <person name="Yang E."/>
            <person name="Al Tenaiji A."/>
            <person name="Jamuar S.S."/>
            <person name="Schlaeger T.M."/>
            <person name="Al-Saffar M."/>
            <person name="Hovel I."/>
            <person name="Al-Shamsi A."/>
            <person name="Basel-Salmon L."/>
            <person name="Amir A.Z."/>
            <person name="Rento L.M."/>
            <person name="Lim J.Y."/>
            <person name="Ganesan I."/>
            <person name="Shril S."/>
            <person name="Evrony G."/>
            <person name="Barkovich A.J."/>
            <person name="Bauer P."/>
            <person name="Hildebrandt F."/>
            <person name="Dong M."/>
            <person name="Borck G."/>
            <person name="Beetz C."/>
            <person name="Al-Gazali L."/>
            <person name="Eyaid W."/>
            <person name="Walsh C.A."/>
        </authorList>
    </citation>
    <scope>INVOLVEMENT IN NEDDFAS</scope>
    <scope>TISSUE SPECIFICITY</scope>
</reference>
<reference evidence="22" key="17">
    <citation type="journal article" date="2020" name="Elife">
        <title>The architecture of EMC reveals a path for membrane protein insertion.</title>
        <authorList>
            <person name="O'Donnell J.P."/>
            <person name="Phillips B.P."/>
            <person name="Yagita Y."/>
            <person name="Juszkiewicz S."/>
            <person name="Wagner A."/>
            <person name="Malinverni D."/>
            <person name="Keenan R.J."/>
            <person name="Miller E.A."/>
            <person name="Hegde R.S."/>
        </authorList>
    </citation>
    <scope>STRUCTURE BY ELECTRON MICROSCOPY (6.40 ANGSTROMS) OF THE EMC COMPLEX</scope>
    <scope>FUNCTION</scope>
    <scope>SUBCELLULAR LOCATION</scope>
</reference>
<reference evidence="21" key="18">
    <citation type="journal article" date="2020" name="Science">
        <title>Structural basis for membrane insertion by the human ER membrane protein complex.</title>
        <authorList>
            <person name="Pleiner T."/>
            <person name="Tomaleri G.P."/>
            <person name="Januszyk K."/>
            <person name="Inglis A.J."/>
            <person name="Hazu M."/>
            <person name="Voorhees R.M."/>
        </authorList>
    </citation>
    <scope>STRUCTURE BY ELECTRON MICROSCOPY (3.40 ANGSTROMS) OF THE EMC COMPLEX</scope>
    <scope>FUNCTION</scope>
    <scope>SUBCELLULAR LOCATION</scope>
    <scope>TOPOLOGY</scope>
    <scope>SIGNAL PEPTIDE</scope>
    <scope>GLYCOSYLATION AT ASN-182</scope>
</reference>
<gene>
    <name type="primary">EMC10</name>
    <name type="synonym">C19orf63</name>
    <name type="synonym">INM02</name>
    <name type="ORF">UNQ764/PRO1556</name>
</gene>
<evidence type="ECO:0000255" key="1"/>
<evidence type="ECO:0000269" key="2">
    <source>
    </source>
</evidence>
<evidence type="ECO:0000269" key="3">
    <source>
    </source>
</evidence>
<evidence type="ECO:0000269" key="4">
    <source>
    </source>
</evidence>
<evidence type="ECO:0000269" key="5">
    <source>
    </source>
</evidence>
<evidence type="ECO:0000269" key="6">
    <source>
    </source>
</evidence>
<evidence type="ECO:0000269" key="7">
    <source>
    </source>
</evidence>
<evidence type="ECO:0000269" key="8">
    <source>
    </source>
</evidence>
<evidence type="ECO:0000269" key="9">
    <source>
    </source>
</evidence>
<evidence type="ECO:0000269" key="10">
    <source>
    </source>
</evidence>
<evidence type="ECO:0000269" key="11">
    <source>
    </source>
</evidence>
<evidence type="ECO:0000269" key="12">
    <source>
    </source>
</evidence>
<evidence type="ECO:0000269" key="13">
    <source>
    </source>
</evidence>
<evidence type="ECO:0000303" key="14">
    <source>
    </source>
</evidence>
<evidence type="ECO:0000303" key="15">
    <source>
    </source>
</evidence>
<evidence type="ECO:0000303" key="16">
    <source>
    </source>
</evidence>
<evidence type="ECO:0000305" key="17"/>
<evidence type="ECO:0000305" key="18">
    <source>
    </source>
</evidence>
<evidence type="ECO:0000305" key="19">
    <source>
    </source>
</evidence>
<evidence type="ECO:0000305" key="20">
    <source>
    </source>
</evidence>
<evidence type="ECO:0007744" key="21">
    <source>
        <dbReference type="PDB" id="6WW7"/>
    </source>
</evidence>
<evidence type="ECO:0007744" key="22">
    <source>
        <dbReference type="PDB" id="6Z3W"/>
    </source>
</evidence>
<evidence type="ECO:0007829" key="23">
    <source>
        <dbReference type="PDB" id="6WW7"/>
    </source>
</evidence>
<evidence type="ECO:0007829" key="24">
    <source>
        <dbReference type="PDB" id="8J0O"/>
    </source>
</evidence>
<keyword id="KW-0002">3D-structure</keyword>
<keyword id="KW-0025">Alternative splicing</keyword>
<keyword id="KW-0037">Angiogenesis</keyword>
<keyword id="KW-0256">Endoplasmic reticulum</keyword>
<keyword id="KW-0325">Glycoprotein</keyword>
<keyword id="KW-0991">Intellectual disability</keyword>
<keyword id="KW-0472">Membrane</keyword>
<keyword id="KW-1267">Proteomics identification</keyword>
<keyword id="KW-1185">Reference proteome</keyword>
<keyword id="KW-0964">Secreted</keyword>
<keyword id="KW-0732">Signal</keyword>
<keyword id="KW-0812">Transmembrane</keyword>
<keyword id="KW-1133">Transmembrane helix</keyword>
<comment type="function">
    <text evidence="6 7 8 9 10 11 17">Part of the endoplasmic reticulum membrane protein complex (EMC) that enables the energy-independent insertion into endoplasmic reticulum membranes of newly synthesized membrane proteins (PubMed:29242231, PubMed:29809151, PubMed:30415835, PubMed:32439656, PubMed:32459176). Preferentially accommodates proteins with transmembrane domains that are weakly hydrophobic or contain destabilizing features such as charged and aromatic residues (PubMed:29242231, PubMed:29809151, PubMed:30415835). Involved in the cotranslational insertion of multi-pass membrane proteins in which stop-transfer membrane-anchor sequences become ER membrane spanning helices (PubMed:29809151, PubMed:30415835). It is also required for the post-translational insertion of tail-anchored/TA proteins in endoplasmic reticulum membranes (PubMed:29242231, PubMed:29809151). By mediating the proper cotranslational insertion of N-terminal transmembrane domains in an N-exo topology, with translocated N-terminus in the lumen of the ER, controls the topology of multi-pass membrane proteins like the G protein-coupled receptors (PubMed:30415835). By regulating the insertion of various proteins in membranes, it is indirectly involved in many cellular processes (Probable). Promotes angiogenesis and tissue repair in the heart after myocardial infarction. Stimulates cardiac endothelial cell migration and outgrowth via the activation of p38 MAPK, PAK and MAPK2 signaling pathways (PubMed:28931551).</text>
</comment>
<comment type="subunit">
    <text evidence="5 7 10 11">Component of the ER membrane protein complex (EMC).</text>
</comment>
<comment type="subcellular location">
    <molecule>Isoform 1</molecule>
    <subcellularLocation>
        <location evidence="18 19 20">Endoplasmic reticulum membrane</location>
        <topology evidence="10 11">Single-pass type I membrane protein</topology>
    </subcellularLocation>
</comment>
<comment type="subcellular location">
    <molecule>Isoform 2</molecule>
    <subcellularLocation>
        <location evidence="3 4 6">Secreted</location>
    </subcellularLocation>
</comment>
<comment type="alternative products">
    <event type="alternative splicing"/>
    <isoform>
        <id>Q5UCC4-1</id>
        <name>1</name>
        <name evidence="16">HSM1</name>
        <sequence type="displayed"/>
    </isoform>
    <isoform>
        <id>Q5UCC4-2</id>
        <name>2</name>
        <name evidence="16">Hematopoietic signal peptide-containing secreted protein 1</name>
        <name evidence="16">HSS1</name>
        <sequence type="described" ref="VSP_030473"/>
    </isoform>
</comment>
<comment type="tissue specificity">
    <text evidence="3 4 6 13">Present in serum (at protein level). Increased expression seen in the left ventrice after myocardial infarction (at protein level). Expressed in the pituitary gland. Expressed in brain (PubMed:33531666).</text>
</comment>
<comment type="PTM">
    <text evidence="2 4">Glycosylated.</text>
</comment>
<comment type="disease" evidence="12 13">
    <disease id="DI-06069">
        <name>Neurodevelopmental disorder with dysmorphic facies and variable seizures</name>
        <acronym>NEDDFAS</acronym>
        <description>An autosomal recessive disorder characterized by global developmental delay apparent in early childhood, mildly impaired intellectual development, speech delay, behavioral abnormalities, and non-specific dysmorphic facial features. Some patients may have seizures, brain imaging abnormalities, mild skeletal defects, and renal abnormalities.</description>
        <dbReference type="MIM" id="619264"/>
    </disease>
    <text>The disease is caused by variants affecting the gene represented in this entry.</text>
</comment>
<comment type="similarity">
    <text evidence="17">Belongs to the EMC10 family.</text>
</comment>
<comment type="sequence caution" evidence="17">
    <conflict type="miscellaneous discrepancy">
        <sequence resource="EMBL-CDS" id="AAQ89073"/>
    </conflict>
    <text>Intron retention at the C-terminus.</text>
</comment>